<proteinExistence type="inferred from homology"/>
<name>TRPD_RUEPO</name>
<dbReference type="EC" id="2.4.2.18" evidence="1"/>
<dbReference type="EMBL" id="CP000031">
    <property type="protein sequence ID" value="AAV95418.1"/>
    <property type="molecule type" value="Genomic_DNA"/>
</dbReference>
<dbReference type="RefSeq" id="WP_011047873.1">
    <property type="nucleotide sequence ID" value="NC_003911.12"/>
</dbReference>
<dbReference type="SMR" id="Q5LRH8"/>
<dbReference type="STRING" id="246200.SPO2150"/>
<dbReference type="PaxDb" id="246200-SPO2150"/>
<dbReference type="KEGG" id="sil:SPO2150"/>
<dbReference type="eggNOG" id="COG0547">
    <property type="taxonomic scope" value="Bacteria"/>
</dbReference>
<dbReference type="HOGENOM" id="CLU_034315_2_1_5"/>
<dbReference type="OrthoDB" id="9806430at2"/>
<dbReference type="UniPathway" id="UPA00035">
    <property type="reaction ID" value="UER00041"/>
</dbReference>
<dbReference type="Proteomes" id="UP000001023">
    <property type="component" value="Chromosome"/>
</dbReference>
<dbReference type="GO" id="GO:0005829">
    <property type="term" value="C:cytosol"/>
    <property type="evidence" value="ECO:0007669"/>
    <property type="project" value="TreeGrafter"/>
</dbReference>
<dbReference type="GO" id="GO:0004048">
    <property type="term" value="F:anthranilate phosphoribosyltransferase activity"/>
    <property type="evidence" value="ECO:0007669"/>
    <property type="project" value="UniProtKB-UniRule"/>
</dbReference>
<dbReference type="GO" id="GO:0000287">
    <property type="term" value="F:magnesium ion binding"/>
    <property type="evidence" value="ECO:0007669"/>
    <property type="project" value="UniProtKB-UniRule"/>
</dbReference>
<dbReference type="GO" id="GO:0000162">
    <property type="term" value="P:L-tryptophan biosynthetic process"/>
    <property type="evidence" value="ECO:0007669"/>
    <property type="project" value="UniProtKB-UniRule"/>
</dbReference>
<dbReference type="FunFam" id="3.40.1030.10:FF:000002">
    <property type="entry name" value="Anthranilate phosphoribosyltransferase"/>
    <property type="match status" value="1"/>
</dbReference>
<dbReference type="Gene3D" id="3.40.1030.10">
    <property type="entry name" value="Nucleoside phosphorylase/phosphoribosyltransferase catalytic domain"/>
    <property type="match status" value="1"/>
</dbReference>
<dbReference type="Gene3D" id="1.20.970.10">
    <property type="entry name" value="Transferase, Pyrimidine Nucleoside Phosphorylase, Chain C"/>
    <property type="match status" value="1"/>
</dbReference>
<dbReference type="HAMAP" id="MF_00211">
    <property type="entry name" value="TrpD"/>
    <property type="match status" value="1"/>
</dbReference>
<dbReference type="InterPro" id="IPR005940">
    <property type="entry name" value="Anthranilate_Pribosyl_Tfrase"/>
</dbReference>
<dbReference type="InterPro" id="IPR000312">
    <property type="entry name" value="Glycosyl_Trfase_fam3"/>
</dbReference>
<dbReference type="InterPro" id="IPR017459">
    <property type="entry name" value="Glycosyl_Trfase_fam3_N_dom"/>
</dbReference>
<dbReference type="InterPro" id="IPR036320">
    <property type="entry name" value="Glycosyl_Trfase_fam3_N_dom_sf"/>
</dbReference>
<dbReference type="InterPro" id="IPR035902">
    <property type="entry name" value="Nuc_phospho_transferase"/>
</dbReference>
<dbReference type="NCBIfam" id="TIGR01245">
    <property type="entry name" value="trpD"/>
    <property type="match status" value="1"/>
</dbReference>
<dbReference type="PANTHER" id="PTHR43285">
    <property type="entry name" value="ANTHRANILATE PHOSPHORIBOSYLTRANSFERASE"/>
    <property type="match status" value="1"/>
</dbReference>
<dbReference type="PANTHER" id="PTHR43285:SF2">
    <property type="entry name" value="ANTHRANILATE PHOSPHORIBOSYLTRANSFERASE"/>
    <property type="match status" value="1"/>
</dbReference>
<dbReference type="Pfam" id="PF02885">
    <property type="entry name" value="Glycos_trans_3N"/>
    <property type="match status" value="1"/>
</dbReference>
<dbReference type="Pfam" id="PF00591">
    <property type="entry name" value="Glycos_transf_3"/>
    <property type="match status" value="1"/>
</dbReference>
<dbReference type="SUPFAM" id="SSF52418">
    <property type="entry name" value="Nucleoside phosphorylase/phosphoribosyltransferase catalytic domain"/>
    <property type="match status" value="1"/>
</dbReference>
<dbReference type="SUPFAM" id="SSF47648">
    <property type="entry name" value="Nucleoside phosphorylase/phosphoribosyltransferase N-terminal domain"/>
    <property type="match status" value="1"/>
</dbReference>
<organism>
    <name type="scientific">Ruegeria pomeroyi (strain ATCC 700808 / DSM 15171 / DSS-3)</name>
    <name type="common">Silicibacter pomeroyi</name>
    <dbReference type="NCBI Taxonomy" id="246200"/>
    <lineage>
        <taxon>Bacteria</taxon>
        <taxon>Pseudomonadati</taxon>
        <taxon>Pseudomonadota</taxon>
        <taxon>Alphaproteobacteria</taxon>
        <taxon>Rhodobacterales</taxon>
        <taxon>Roseobacteraceae</taxon>
        <taxon>Ruegeria</taxon>
    </lineage>
</organism>
<protein>
    <recommendedName>
        <fullName evidence="1">Anthranilate phosphoribosyltransferase</fullName>
        <ecNumber evidence="1">2.4.2.18</ecNumber>
    </recommendedName>
</protein>
<comment type="function">
    <text evidence="1">Catalyzes the transfer of the phosphoribosyl group of 5-phosphorylribose-1-pyrophosphate (PRPP) to anthranilate to yield N-(5'-phosphoribosyl)-anthranilate (PRA).</text>
</comment>
<comment type="catalytic activity">
    <reaction evidence="1">
        <text>N-(5-phospho-beta-D-ribosyl)anthranilate + diphosphate = 5-phospho-alpha-D-ribose 1-diphosphate + anthranilate</text>
        <dbReference type="Rhea" id="RHEA:11768"/>
        <dbReference type="ChEBI" id="CHEBI:16567"/>
        <dbReference type="ChEBI" id="CHEBI:18277"/>
        <dbReference type="ChEBI" id="CHEBI:33019"/>
        <dbReference type="ChEBI" id="CHEBI:58017"/>
        <dbReference type="EC" id="2.4.2.18"/>
    </reaction>
</comment>
<comment type="cofactor">
    <cofactor evidence="1">
        <name>Mg(2+)</name>
        <dbReference type="ChEBI" id="CHEBI:18420"/>
    </cofactor>
    <text evidence="1">Binds 2 magnesium ions per monomer.</text>
</comment>
<comment type="pathway">
    <text evidence="1">Amino-acid biosynthesis; L-tryptophan biosynthesis; L-tryptophan from chorismate: step 2/5.</text>
</comment>
<comment type="subunit">
    <text evidence="1">Homodimer.</text>
</comment>
<comment type="similarity">
    <text evidence="1">Belongs to the anthranilate phosphoribosyltransferase family.</text>
</comment>
<evidence type="ECO:0000255" key="1">
    <source>
        <dbReference type="HAMAP-Rule" id="MF_00211"/>
    </source>
</evidence>
<feature type="chain" id="PRO_0000227189" description="Anthranilate phosphoribosyltransferase">
    <location>
        <begin position="1"/>
        <end position="339"/>
    </location>
</feature>
<feature type="binding site" evidence="1">
    <location>
        <position position="81"/>
    </location>
    <ligand>
        <name>5-phospho-alpha-D-ribose 1-diphosphate</name>
        <dbReference type="ChEBI" id="CHEBI:58017"/>
    </ligand>
</feature>
<feature type="binding site" evidence="1">
    <location>
        <position position="81"/>
    </location>
    <ligand>
        <name>anthranilate</name>
        <dbReference type="ChEBI" id="CHEBI:16567"/>
        <label>1</label>
    </ligand>
</feature>
<feature type="binding site" evidence="1">
    <location>
        <begin position="84"/>
        <end position="85"/>
    </location>
    <ligand>
        <name>5-phospho-alpha-D-ribose 1-diphosphate</name>
        <dbReference type="ChEBI" id="CHEBI:58017"/>
    </ligand>
</feature>
<feature type="binding site" evidence="1">
    <location>
        <position position="89"/>
    </location>
    <ligand>
        <name>5-phospho-alpha-D-ribose 1-diphosphate</name>
        <dbReference type="ChEBI" id="CHEBI:58017"/>
    </ligand>
</feature>
<feature type="binding site" evidence="1">
    <location>
        <begin position="91"/>
        <end position="94"/>
    </location>
    <ligand>
        <name>5-phospho-alpha-D-ribose 1-diphosphate</name>
        <dbReference type="ChEBI" id="CHEBI:58017"/>
    </ligand>
</feature>
<feature type="binding site" evidence="1">
    <location>
        <position position="93"/>
    </location>
    <ligand>
        <name>Mg(2+)</name>
        <dbReference type="ChEBI" id="CHEBI:18420"/>
        <label>1</label>
    </ligand>
</feature>
<feature type="binding site" evidence="1">
    <location>
        <begin position="109"/>
        <end position="117"/>
    </location>
    <ligand>
        <name>5-phospho-alpha-D-ribose 1-diphosphate</name>
        <dbReference type="ChEBI" id="CHEBI:58017"/>
    </ligand>
</feature>
<feature type="binding site" evidence="1">
    <location>
        <position position="112"/>
    </location>
    <ligand>
        <name>anthranilate</name>
        <dbReference type="ChEBI" id="CHEBI:16567"/>
        <label>1</label>
    </ligand>
</feature>
<feature type="binding site" evidence="1">
    <location>
        <position position="121"/>
    </location>
    <ligand>
        <name>5-phospho-alpha-D-ribose 1-diphosphate</name>
        <dbReference type="ChEBI" id="CHEBI:58017"/>
    </ligand>
</feature>
<feature type="binding site" evidence="1">
    <location>
        <position position="167"/>
    </location>
    <ligand>
        <name>anthranilate</name>
        <dbReference type="ChEBI" id="CHEBI:16567"/>
        <label>2</label>
    </ligand>
</feature>
<feature type="binding site" evidence="1">
    <location>
        <position position="226"/>
    </location>
    <ligand>
        <name>Mg(2+)</name>
        <dbReference type="ChEBI" id="CHEBI:18420"/>
        <label>2</label>
    </ligand>
</feature>
<feature type="binding site" evidence="1">
    <location>
        <position position="227"/>
    </location>
    <ligand>
        <name>Mg(2+)</name>
        <dbReference type="ChEBI" id="CHEBI:18420"/>
        <label>1</label>
    </ligand>
</feature>
<feature type="binding site" evidence="1">
    <location>
        <position position="227"/>
    </location>
    <ligand>
        <name>Mg(2+)</name>
        <dbReference type="ChEBI" id="CHEBI:18420"/>
        <label>2</label>
    </ligand>
</feature>
<reference key="1">
    <citation type="journal article" date="2004" name="Nature">
        <title>Genome sequence of Silicibacter pomeroyi reveals adaptations to the marine environment.</title>
        <authorList>
            <person name="Moran M.A."/>
            <person name="Buchan A."/>
            <person name="Gonzalez J.M."/>
            <person name="Heidelberg J.F."/>
            <person name="Whitman W.B."/>
            <person name="Kiene R.P."/>
            <person name="Henriksen J.R."/>
            <person name="King G.M."/>
            <person name="Belas R."/>
            <person name="Fuqua C."/>
            <person name="Brinkac L.M."/>
            <person name="Lewis M."/>
            <person name="Johri S."/>
            <person name="Weaver B."/>
            <person name="Pai G."/>
            <person name="Eisen J.A."/>
            <person name="Rahe E."/>
            <person name="Sheldon W.M."/>
            <person name="Ye W."/>
            <person name="Miller T.R."/>
            <person name="Carlton J."/>
            <person name="Rasko D.A."/>
            <person name="Paulsen I.T."/>
            <person name="Ren Q."/>
            <person name="Daugherty S.C."/>
            <person name="DeBoy R.T."/>
            <person name="Dodson R.J."/>
            <person name="Durkin A.S."/>
            <person name="Madupu R."/>
            <person name="Nelson W.C."/>
            <person name="Sullivan S.A."/>
            <person name="Rosovitz M.J."/>
            <person name="Haft D.H."/>
            <person name="Selengut J."/>
            <person name="Ward N."/>
        </authorList>
    </citation>
    <scope>NUCLEOTIDE SEQUENCE [LARGE SCALE GENOMIC DNA]</scope>
    <source>
        <strain>ATCC 700808 / DSM 15171 / DSS-3</strain>
    </source>
</reference>
<reference key="2">
    <citation type="journal article" date="2014" name="Stand. Genomic Sci.">
        <title>An updated genome annotation for the model marine bacterium Ruegeria pomeroyi DSS-3.</title>
        <authorList>
            <person name="Rivers A.R."/>
            <person name="Smith C.B."/>
            <person name="Moran M.A."/>
        </authorList>
    </citation>
    <scope>GENOME REANNOTATION</scope>
    <source>
        <strain>ATCC 700808 / DSM 15171 / DSS-3</strain>
    </source>
</reference>
<sequence length="339" mass="35054">MSDALKPLIGAAADRPLTRAEAEQAFTILFDGEATPSQIGGLLMALRTRGETVDEYAAAAAVMRAKCNAVRAPEGAMDIVGTGGDGKNTLNISTATAFVVAGAGVVVAKHGNRNLSSKSGTADLQGQMGINVMVGPQVVEKALNEAGIGFMMAPMHHPATAHVMPTRAELGTRTIFNILGPLTNPAGVKRQLTGAFTRALIRPMAETLGLLGSERAWLVHGSDGTDELTITGVSWVAALEDGTVKEVELHPEDAGLPVHPFEAIIGGTPEENATAFRALLDGAPSAYRDAVLLNAAAALVVADRAADLREGVALAAQSIDSGQARAKVEALSRITQDAR</sequence>
<gene>
    <name evidence="1" type="primary">trpD</name>
    <name type="ordered locus">SPO2150</name>
</gene>
<keyword id="KW-0028">Amino-acid biosynthesis</keyword>
<keyword id="KW-0057">Aromatic amino acid biosynthesis</keyword>
<keyword id="KW-0328">Glycosyltransferase</keyword>
<keyword id="KW-0460">Magnesium</keyword>
<keyword id="KW-0479">Metal-binding</keyword>
<keyword id="KW-1185">Reference proteome</keyword>
<keyword id="KW-0808">Transferase</keyword>
<keyword id="KW-0822">Tryptophan biosynthesis</keyword>
<accession>Q5LRH8</accession>